<reference key="1">
    <citation type="journal article" date="2007" name="PLoS ONE">
        <title>A glimpse of streptococcal toxic shock syndrome from comparative genomics of S. suis 2 Chinese isolates.</title>
        <authorList>
            <person name="Chen C."/>
            <person name="Tang J."/>
            <person name="Dong W."/>
            <person name="Wang C."/>
            <person name="Feng Y."/>
            <person name="Wang J."/>
            <person name="Zheng F."/>
            <person name="Pan X."/>
            <person name="Liu D."/>
            <person name="Li M."/>
            <person name="Song Y."/>
            <person name="Zhu X."/>
            <person name="Sun H."/>
            <person name="Feng T."/>
            <person name="Guo Z."/>
            <person name="Ju A."/>
            <person name="Ge J."/>
            <person name="Dong Y."/>
            <person name="Sun W."/>
            <person name="Jiang Y."/>
            <person name="Wang J."/>
            <person name="Yan J."/>
            <person name="Yang H."/>
            <person name="Wang X."/>
            <person name="Gao G.F."/>
            <person name="Yang R."/>
            <person name="Wang J."/>
            <person name="Yu J."/>
        </authorList>
    </citation>
    <scope>NUCLEOTIDE SEQUENCE [LARGE SCALE GENOMIC DNA]</scope>
    <source>
        <strain>05ZYH33</strain>
    </source>
</reference>
<dbReference type="EC" id="2.1.1.33" evidence="2"/>
<dbReference type="EMBL" id="CP000407">
    <property type="protein sequence ID" value="ABP90817.1"/>
    <property type="molecule type" value="Genomic_DNA"/>
</dbReference>
<dbReference type="SMR" id="A4VXH8"/>
<dbReference type="STRING" id="391295.SSU05_1851"/>
<dbReference type="KEGG" id="ssu:SSU05_1851"/>
<dbReference type="eggNOG" id="COG0220">
    <property type="taxonomic scope" value="Bacteria"/>
</dbReference>
<dbReference type="HOGENOM" id="CLU_050910_2_1_9"/>
<dbReference type="UniPathway" id="UPA00989"/>
<dbReference type="GO" id="GO:0043527">
    <property type="term" value="C:tRNA methyltransferase complex"/>
    <property type="evidence" value="ECO:0007669"/>
    <property type="project" value="TreeGrafter"/>
</dbReference>
<dbReference type="GO" id="GO:0008176">
    <property type="term" value="F:tRNA (guanine(46)-N7)-methyltransferase activity"/>
    <property type="evidence" value="ECO:0007669"/>
    <property type="project" value="UniProtKB-UniRule"/>
</dbReference>
<dbReference type="FunFam" id="3.40.50.150:FF:000035">
    <property type="entry name" value="tRNA (guanine-N(7)-)-methyltransferase"/>
    <property type="match status" value="1"/>
</dbReference>
<dbReference type="Gene3D" id="3.40.50.150">
    <property type="entry name" value="Vaccinia Virus protein VP39"/>
    <property type="match status" value="1"/>
</dbReference>
<dbReference type="HAMAP" id="MF_01057">
    <property type="entry name" value="tRNA_methyltr_TrmB"/>
    <property type="match status" value="1"/>
</dbReference>
<dbReference type="InterPro" id="IPR029063">
    <property type="entry name" value="SAM-dependent_MTases_sf"/>
</dbReference>
<dbReference type="InterPro" id="IPR003358">
    <property type="entry name" value="tRNA_(Gua-N-7)_MeTrfase_Trmb"/>
</dbReference>
<dbReference type="InterPro" id="IPR055361">
    <property type="entry name" value="tRNA_methyltr_TrmB_bact"/>
</dbReference>
<dbReference type="NCBIfam" id="NF001080">
    <property type="entry name" value="PRK00121.2-2"/>
    <property type="match status" value="1"/>
</dbReference>
<dbReference type="NCBIfam" id="TIGR00091">
    <property type="entry name" value="tRNA (guanosine(46)-N7)-methyltransferase TrmB"/>
    <property type="match status" value="1"/>
</dbReference>
<dbReference type="PANTHER" id="PTHR23417">
    <property type="entry name" value="3-DEOXY-D-MANNO-OCTULOSONIC-ACID TRANSFERASE/TRNA GUANINE-N 7 - -METHYLTRANSFERASE"/>
    <property type="match status" value="1"/>
</dbReference>
<dbReference type="PANTHER" id="PTHR23417:SF14">
    <property type="entry name" value="PENTACOTRIPEPTIDE-REPEAT REGION OF PRORP DOMAIN-CONTAINING PROTEIN"/>
    <property type="match status" value="1"/>
</dbReference>
<dbReference type="Pfam" id="PF02390">
    <property type="entry name" value="Methyltransf_4"/>
    <property type="match status" value="1"/>
</dbReference>
<dbReference type="SUPFAM" id="SSF53335">
    <property type="entry name" value="S-adenosyl-L-methionine-dependent methyltransferases"/>
    <property type="match status" value="1"/>
</dbReference>
<dbReference type="PROSITE" id="PS51625">
    <property type="entry name" value="SAM_MT_TRMB"/>
    <property type="match status" value="1"/>
</dbReference>
<accession>A4VXH8</accession>
<proteinExistence type="inferred from homology"/>
<feature type="chain" id="PRO_1000064413" description="tRNA (guanine-N(7)-)-methyltransferase">
    <location>
        <begin position="1"/>
        <end position="212"/>
    </location>
</feature>
<feature type="region of interest" description="Interaction with RNA" evidence="2">
    <location>
        <begin position="124"/>
        <end position="129"/>
    </location>
</feature>
<feature type="active site" evidence="1">
    <location>
        <position position="118"/>
    </location>
</feature>
<feature type="binding site" evidence="2">
    <location>
        <position position="44"/>
    </location>
    <ligand>
        <name>S-adenosyl-L-methionine</name>
        <dbReference type="ChEBI" id="CHEBI:59789"/>
    </ligand>
</feature>
<feature type="binding site" evidence="2">
    <location>
        <position position="69"/>
    </location>
    <ligand>
        <name>S-adenosyl-L-methionine</name>
        <dbReference type="ChEBI" id="CHEBI:59789"/>
    </ligand>
</feature>
<feature type="binding site" evidence="2">
    <location>
        <position position="96"/>
    </location>
    <ligand>
        <name>S-adenosyl-L-methionine</name>
        <dbReference type="ChEBI" id="CHEBI:59789"/>
    </ligand>
</feature>
<feature type="binding site" evidence="2">
    <location>
        <position position="118"/>
    </location>
    <ligand>
        <name>S-adenosyl-L-methionine</name>
        <dbReference type="ChEBI" id="CHEBI:59789"/>
    </ligand>
</feature>
<feature type="binding site" evidence="2">
    <location>
        <position position="122"/>
    </location>
    <ligand>
        <name>substrate</name>
    </ligand>
</feature>
<feature type="binding site" evidence="2">
    <location>
        <position position="154"/>
    </location>
    <ligand>
        <name>substrate</name>
    </ligand>
</feature>
<feature type="binding site" evidence="2">
    <location>
        <begin position="191"/>
        <end position="194"/>
    </location>
    <ligand>
        <name>substrate</name>
    </ligand>
</feature>
<sequence length="212" mass="24291">MRVRNRKGASELLANNPQYVISNPEECKGKWAEIFGNNNPIHIEVGSGKGRFVTGMAAQNPDINYIGIDIQMTVLSYALDRVLEAGLPNIKLLQVDGSSLTNYFAPAEIDQLYLNFSDPWPKKRHEKRRLTYKSFLDTYKEILPEKGEIHFKTDNRGLFEYSLASFSQYGMVLKQVWLDLHADGLEGNVMTEYEEKFSNKGQVIYRVEAQFQ</sequence>
<comment type="function">
    <text evidence="2">Catalyzes the formation of N(7)-methylguanine at position 46 (m7G46) in tRNA.</text>
</comment>
<comment type="catalytic activity">
    <reaction evidence="2">
        <text>guanosine(46) in tRNA + S-adenosyl-L-methionine = N(7)-methylguanosine(46) in tRNA + S-adenosyl-L-homocysteine</text>
        <dbReference type="Rhea" id="RHEA:42708"/>
        <dbReference type="Rhea" id="RHEA-COMP:10188"/>
        <dbReference type="Rhea" id="RHEA-COMP:10189"/>
        <dbReference type="ChEBI" id="CHEBI:57856"/>
        <dbReference type="ChEBI" id="CHEBI:59789"/>
        <dbReference type="ChEBI" id="CHEBI:74269"/>
        <dbReference type="ChEBI" id="CHEBI:74480"/>
        <dbReference type="EC" id="2.1.1.33"/>
    </reaction>
</comment>
<comment type="pathway">
    <text evidence="2">tRNA modification; N(7)-methylguanine-tRNA biosynthesis.</text>
</comment>
<comment type="similarity">
    <text evidence="2">Belongs to the class I-like SAM-binding methyltransferase superfamily. TrmB family.</text>
</comment>
<evidence type="ECO:0000250" key="1"/>
<evidence type="ECO:0000255" key="2">
    <source>
        <dbReference type="HAMAP-Rule" id="MF_01057"/>
    </source>
</evidence>
<keyword id="KW-0489">Methyltransferase</keyword>
<keyword id="KW-0949">S-adenosyl-L-methionine</keyword>
<keyword id="KW-0808">Transferase</keyword>
<keyword id="KW-0819">tRNA processing</keyword>
<name>TRMB_STRSY</name>
<protein>
    <recommendedName>
        <fullName evidence="2">tRNA (guanine-N(7)-)-methyltransferase</fullName>
        <ecNumber evidence="2">2.1.1.33</ecNumber>
    </recommendedName>
    <alternativeName>
        <fullName evidence="2">tRNA (guanine(46)-N(7))-methyltransferase</fullName>
    </alternativeName>
    <alternativeName>
        <fullName evidence="2">tRNA(m7G46)-methyltransferase</fullName>
    </alternativeName>
</protein>
<gene>
    <name evidence="2" type="primary">trmB</name>
    <name type="ordered locus">SSU05_1851</name>
</gene>
<organism>
    <name type="scientific">Streptococcus suis (strain 05ZYH33)</name>
    <dbReference type="NCBI Taxonomy" id="391295"/>
    <lineage>
        <taxon>Bacteria</taxon>
        <taxon>Bacillati</taxon>
        <taxon>Bacillota</taxon>
        <taxon>Bacilli</taxon>
        <taxon>Lactobacillales</taxon>
        <taxon>Streptococcaceae</taxon>
        <taxon>Streptococcus</taxon>
    </lineage>
</organism>